<proteinExistence type="evidence at transcript level"/>
<organism>
    <name type="scientific">Arabidopsis thaliana</name>
    <name type="common">Mouse-ear cress</name>
    <dbReference type="NCBI Taxonomy" id="3702"/>
    <lineage>
        <taxon>Eukaryota</taxon>
        <taxon>Viridiplantae</taxon>
        <taxon>Streptophyta</taxon>
        <taxon>Embryophyta</taxon>
        <taxon>Tracheophyta</taxon>
        <taxon>Spermatophyta</taxon>
        <taxon>Magnoliopsida</taxon>
        <taxon>eudicotyledons</taxon>
        <taxon>Gunneridae</taxon>
        <taxon>Pentapetalae</taxon>
        <taxon>rosids</taxon>
        <taxon>malvids</taxon>
        <taxon>Brassicales</taxon>
        <taxon>Brassicaceae</taxon>
        <taxon>Camelineae</taxon>
        <taxon>Arabidopsis</taxon>
    </lineage>
</organism>
<gene>
    <name type="ordered locus">At1g05920</name>
    <name type="ORF">T20M3.20</name>
</gene>
<name>Y1592_ARATH</name>
<dbReference type="EMBL" id="AC009999">
    <property type="protein sequence ID" value="AAF29399.1"/>
    <property type="status" value="ALT_SEQ"/>
    <property type="molecule type" value="Genomic_DNA"/>
</dbReference>
<dbReference type="EMBL" id="CP002684">
    <property type="protein sequence ID" value="AEE27918.1"/>
    <property type="molecule type" value="Genomic_DNA"/>
</dbReference>
<dbReference type="EMBL" id="AY800566">
    <property type="protein sequence ID" value="AAV68802.1"/>
    <property type="molecule type" value="mRNA"/>
</dbReference>
<dbReference type="EMBL" id="AY803489">
    <property type="protein sequence ID" value="AAV66313.1"/>
    <property type="molecule type" value="Genomic_DNA"/>
</dbReference>
<dbReference type="EMBL" id="AB493436">
    <property type="protein sequence ID" value="BAH30274.1"/>
    <property type="molecule type" value="Genomic_DNA"/>
</dbReference>
<dbReference type="PIR" id="C86194">
    <property type="entry name" value="C86194"/>
</dbReference>
<dbReference type="RefSeq" id="NP_172083.1">
    <property type="nucleotide sequence ID" value="NM_100473.2"/>
</dbReference>
<dbReference type="GlyGen" id="Q5RM09">
    <property type="glycosylation" value="1 site"/>
</dbReference>
<dbReference type="iPTMnet" id="Q5RM09"/>
<dbReference type="PaxDb" id="3702-AT1G05920.1"/>
<dbReference type="EnsemblPlants" id="AT1G05920.1">
    <property type="protein sequence ID" value="AT1G05920.1"/>
    <property type="gene ID" value="AT1G05920"/>
</dbReference>
<dbReference type="GeneID" id="837102"/>
<dbReference type="Gramene" id="AT1G05920.1">
    <property type="protein sequence ID" value="AT1G05920.1"/>
    <property type="gene ID" value="AT1G05920"/>
</dbReference>
<dbReference type="KEGG" id="ath:AT1G05920"/>
<dbReference type="Araport" id="AT1G05920"/>
<dbReference type="TAIR" id="AT1G05920"/>
<dbReference type="eggNOG" id="ENOG502S4WY">
    <property type="taxonomic scope" value="Eukaryota"/>
</dbReference>
<dbReference type="HOGENOM" id="CLU_883822_0_0_1"/>
<dbReference type="InParanoid" id="Q5RM09"/>
<dbReference type="OMA" id="EVREEIC"/>
<dbReference type="PhylomeDB" id="Q5RM09"/>
<dbReference type="PRO" id="PR:Q5RM09"/>
<dbReference type="Proteomes" id="UP000006548">
    <property type="component" value="Chromosome 1"/>
</dbReference>
<dbReference type="ExpressionAtlas" id="Q5RM09">
    <property type="expression patterns" value="baseline and differential"/>
</dbReference>
<dbReference type="GO" id="GO:0005634">
    <property type="term" value="C:nucleus"/>
    <property type="evidence" value="ECO:0007669"/>
    <property type="project" value="UniProtKB-SubCell"/>
</dbReference>
<dbReference type="GO" id="GO:0003677">
    <property type="term" value="F:DNA binding"/>
    <property type="evidence" value="ECO:0007669"/>
    <property type="project" value="UniProtKB-KW"/>
</dbReference>
<dbReference type="CDD" id="cd10017">
    <property type="entry name" value="B3_DNA"/>
    <property type="match status" value="1"/>
</dbReference>
<dbReference type="Gene3D" id="2.40.330.10">
    <property type="entry name" value="DNA-binding pseudobarrel domain"/>
    <property type="match status" value="1"/>
</dbReference>
<dbReference type="InterPro" id="IPR005508">
    <property type="entry name" value="At2g31720-like"/>
</dbReference>
<dbReference type="InterPro" id="IPR003340">
    <property type="entry name" value="B3_DNA-bd"/>
</dbReference>
<dbReference type="InterPro" id="IPR015300">
    <property type="entry name" value="DNA-bd_pseudobarrel_sf"/>
</dbReference>
<dbReference type="PANTHER" id="PTHR31541">
    <property type="entry name" value="B3 DOMAIN PLANT PROTEIN-RELATED"/>
    <property type="match status" value="1"/>
</dbReference>
<dbReference type="PANTHER" id="PTHR31541:SF45">
    <property type="entry name" value="GENOME ASSEMBLY, CHROMOSOME: A10"/>
    <property type="match status" value="1"/>
</dbReference>
<dbReference type="Pfam" id="PF03754">
    <property type="entry name" value="At2g31720-like"/>
    <property type="match status" value="1"/>
</dbReference>
<dbReference type="SUPFAM" id="SSF101936">
    <property type="entry name" value="DNA-binding pseudobarrel domain"/>
    <property type="match status" value="1"/>
</dbReference>
<dbReference type="PROSITE" id="PS50863">
    <property type="entry name" value="B3"/>
    <property type="match status" value="1"/>
</dbReference>
<sequence length="315" mass="36477">MSSRDKPKTFAEVREEICKRREEMISRDNQKKTKTVAQVREEKGKRREEMISRYNQKKAKTVAQVKEGKGKRREEMISRDNRTKPKTVAQVRDAKRKRTFDHVPRGTREPHAYLRNDPAPQVASVPKSVPEEKDVILDRILSNVPRRKKTTSYEFVPPKHPQEPQWLLQVMSRMNGAGDPKLIIEKNLDSNDVDPRQNRLSIPINTVIQNDFLTLDESRLIDEDEITNEGNMGVAAFLVDQRTKKWNMGFKQWFMTTDSGSSYWSFVLRGEWSNVVETNGLKEGDKISLWSFRSNDILCFALVPPTSSVVESLDK</sequence>
<accession>Q5RM09</accession>
<accession>Q9MA33</accession>
<reference key="1">
    <citation type="journal article" date="2000" name="Nature">
        <title>Sequence and analysis of chromosome 1 of the plant Arabidopsis thaliana.</title>
        <authorList>
            <person name="Theologis A."/>
            <person name="Ecker J.R."/>
            <person name="Palm C.J."/>
            <person name="Federspiel N.A."/>
            <person name="Kaul S."/>
            <person name="White O."/>
            <person name="Alonso J."/>
            <person name="Altafi H."/>
            <person name="Araujo R."/>
            <person name="Bowman C.L."/>
            <person name="Brooks S.Y."/>
            <person name="Buehler E."/>
            <person name="Chan A."/>
            <person name="Chao Q."/>
            <person name="Chen H."/>
            <person name="Cheuk R.F."/>
            <person name="Chin C.W."/>
            <person name="Chung M.K."/>
            <person name="Conn L."/>
            <person name="Conway A.B."/>
            <person name="Conway A.R."/>
            <person name="Creasy T.H."/>
            <person name="Dewar K."/>
            <person name="Dunn P."/>
            <person name="Etgu P."/>
            <person name="Feldblyum T.V."/>
            <person name="Feng J.-D."/>
            <person name="Fong B."/>
            <person name="Fujii C.Y."/>
            <person name="Gill J.E."/>
            <person name="Goldsmith A.D."/>
            <person name="Haas B."/>
            <person name="Hansen N.F."/>
            <person name="Hughes B."/>
            <person name="Huizar L."/>
            <person name="Hunter J.L."/>
            <person name="Jenkins J."/>
            <person name="Johnson-Hopson C."/>
            <person name="Khan S."/>
            <person name="Khaykin E."/>
            <person name="Kim C.J."/>
            <person name="Koo H.L."/>
            <person name="Kremenetskaia I."/>
            <person name="Kurtz D.B."/>
            <person name="Kwan A."/>
            <person name="Lam B."/>
            <person name="Langin-Hooper S."/>
            <person name="Lee A."/>
            <person name="Lee J.M."/>
            <person name="Lenz C.A."/>
            <person name="Li J.H."/>
            <person name="Li Y.-P."/>
            <person name="Lin X."/>
            <person name="Liu S.X."/>
            <person name="Liu Z.A."/>
            <person name="Luros J.S."/>
            <person name="Maiti R."/>
            <person name="Marziali A."/>
            <person name="Militscher J."/>
            <person name="Miranda M."/>
            <person name="Nguyen M."/>
            <person name="Nierman W.C."/>
            <person name="Osborne B.I."/>
            <person name="Pai G."/>
            <person name="Peterson J."/>
            <person name="Pham P.K."/>
            <person name="Rizzo M."/>
            <person name="Rooney T."/>
            <person name="Rowley D."/>
            <person name="Sakano H."/>
            <person name="Salzberg S.L."/>
            <person name="Schwartz J.R."/>
            <person name="Shinn P."/>
            <person name="Southwick A.M."/>
            <person name="Sun H."/>
            <person name="Tallon L.J."/>
            <person name="Tambunga G."/>
            <person name="Toriumi M.J."/>
            <person name="Town C.D."/>
            <person name="Utterback T."/>
            <person name="Van Aken S."/>
            <person name="Vaysberg M."/>
            <person name="Vysotskaia V.S."/>
            <person name="Walker M."/>
            <person name="Wu D."/>
            <person name="Yu G."/>
            <person name="Fraser C.M."/>
            <person name="Venter J.C."/>
            <person name="Davis R.W."/>
        </authorList>
    </citation>
    <scope>NUCLEOTIDE SEQUENCE [LARGE SCALE GENOMIC DNA]</scope>
    <source>
        <strain>cv. Columbia</strain>
    </source>
</reference>
<reference key="2">
    <citation type="journal article" date="2017" name="Plant J.">
        <title>Araport11: a complete reannotation of the Arabidopsis thaliana reference genome.</title>
        <authorList>
            <person name="Cheng C.Y."/>
            <person name="Krishnakumar V."/>
            <person name="Chan A.P."/>
            <person name="Thibaud-Nissen F."/>
            <person name="Schobel S."/>
            <person name="Town C.D."/>
        </authorList>
    </citation>
    <scope>GENOME REANNOTATION</scope>
    <source>
        <strain>cv. Columbia</strain>
    </source>
</reference>
<reference key="3">
    <citation type="submission" date="2004-10" db="EMBL/GenBank/DDBJ databases">
        <authorList>
            <person name="Underwood B.A."/>
            <person name="Xiao Y.-L."/>
            <person name="Moskal W.A. Jr."/>
            <person name="Monaghan E.L."/>
            <person name="Wang W."/>
            <person name="Redman J.C."/>
            <person name="Wu H.C."/>
            <person name="Utterback T."/>
            <person name="Town C.D."/>
        </authorList>
    </citation>
    <scope>NUCLEOTIDE SEQUENCE [LARGE SCALE GENOMIC DNA / MRNA]</scope>
    <source>
        <strain>cv. Columbia</strain>
    </source>
</reference>
<reference key="4">
    <citation type="submission" date="2009-03" db="EMBL/GenBank/DDBJ databases">
        <title>ORF cloning and analysis of Arabidopsis transcription factor genes.</title>
        <authorList>
            <person name="Fujita M."/>
            <person name="Mizukado S."/>
            <person name="Seki M."/>
            <person name="Shinozaki K."/>
            <person name="Mitsuda N."/>
            <person name="Takiguchi Y."/>
            <person name="Takagi M."/>
        </authorList>
    </citation>
    <scope>NUCLEOTIDE SEQUENCE [LARGE SCALE GENOMIC DNA]</scope>
</reference>
<reference key="5">
    <citation type="journal article" date="2008" name="Trends Plant Sci.">
        <title>The plant B3 superfamily.</title>
        <authorList>
            <person name="Swaminathan K."/>
            <person name="Peterson K."/>
            <person name="Jack T."/>
        </authorList>
    </citation>
    <scope>GENE FAMILY</scope>
</reference>
<keyword id="KW-0238">DNA-binding</keyword>
<keyword id="KW-0539">Nucleus</keyword>
<keyword id="KW-1185">Reference proteome</keyword>
<keyword id="KW-0804">Transcription</keyword>
<keyword id="KW-0805">Transcription regulation</keyword>
<comment type="subcellular location">
    <subcellularLocation>
        <location evidence="1">Nucleus</location>
    </subcellularLocation>
</comment>
<comment type="sequence caution" evidence="3">
    <conflict type="erroneous gene model prediction">
        <sequence resource="EMBL-CDS" id="AAF29399"/>
    </conflict>
</comment>
<evidence type="ECO:0000255" key="1">
    <source>
        <dbReference type="PROSITE-ProRule" id="PRU00326"/>
    </source>
</evidence>
<evidence type="ECO:0000256" key="2">
    <source>
        <dbReference type="SAM" id="MobiDB-lite"/>
    </source>
</evidence>
<evidence type="ECO:0000305" key="3"/>
<feature type="chain" id="PRO_0000375125" description="B3 domain-containing protein At1g05920">
    <location>
        <begin position="1"/>
        <end position="315"/>
    </location>
</feature>
<feature type="DNA-binding region" description="TF-B3" evidence="1">
    <location>
        <begin position="204"/>
        <end position="306"/>
    </location>
</feature>
<feature type="region of interest" description="Disordered" evidence="2">
    <location>
        <begin position="24"/>
        <end position="129"/>
    </location>
</feature>
<feature type="compositionally biased region" description="Basic and acidic residues" evidence="2">
    <location>
        <begin position="39"/>
        <end position="51"/>
    </location>
</feature>
<feature type="compositionally biased region" description="Basic and acidic residues" evidence="2">
    <location>
        <begin position="66"/>
        <end position="83"/>
    </location>
</feature>
<feature type="compositionally biased region" description="Basic and acidic residues" evidence="2">
    <location>
        <begin position="100"/>
        <end position="114"/>
    </location>
</feature>
<protein>
    <recommendedName>
        <fullName>B3 domain-containing protein At1g05920</fullName>
    </recommendedName>
</protein>